<proteinExistence type="evidence at protein level"/>
<comment type="function">
    <text evidence="1">Plays a critical role for male fertility and sperm motility by regulating sperm cytoplasm removal and maintaining axoneme integrity.</text>
</comment>
<comment type="subcellular location">
    <subcellularLocation>
        <location evidence="3">Membrane</location>
        <topology evidence="3">Multi-pass membrane protein</topology>
    </subcellularLocation>
</comment>
<comment type="alternative products">
    <event type="alternative splicing"/>
    <isoform>
        <id>C9JQI7-1</id>
        <name>2</name>
        <sequence type="displayed"/>
    </isoform>
    <isoform>
        <id>C9JQI7-2</id>
        <name>1</name>
        <sequence type="described" ref="VSP_039352"/>
    </isoform>
</comment>
<accession>C9JQI7</accession>
<accession>B4DKF4</accession>
<organism>
    <name type="scientific">Homo sapiens</name>
    <name type="common">Human</name>
    <dbReference type="NCBI Taxonomy" id="9606"/>
    <lineage>
        <taxon>Eukaryota</taxon>
        <taxon>Metazoa</taxon>
        <taxon>Chordata</taxon>
        <taxon>Craniata</taxon>
        <taxon>Vertebrata</taxon>
        <taxon>Euteleostomi</taxon>
        <taxon>Mammalia</taxon>
        <taxon>Eutheria</taxon>
        <taxon>Euarchontoglires</taxon>
        <taxon>Primates</taxon>
        <taxon>Haplorrhini</taxon>
        <taxon>Catarrhini</taxon>
        <taxon>Hominidae</taxon>
        <taxon>Homo</taxon>
    </lineage>
</organism>
<name>TM232_HUMAN</name>
<evidence type="ECO:0000250" key="1">
    <source>
        <dbReference type="UniProtKB" id="Q5K6N0"/>
    </source>
</evidence>
<evidence type="ECO:0000255" key="2"/>
<evidence type="ECO:0000305" key="3"/>
<dbReference type="EMBL" id="AK296542">
    <property type="protein sequence ID" value="BAG59166.1"/>
    <property type="molecule type" value="mRNA"/>
</dbReference>
<dbReference type="EMBL" id="AC008650">
    <property type="status" value="NOT_ANNOTATED_CDS"/>
    <property type="molecule type" value="Genomic_DNA"/>
</dbReference>
<dbReference type="EMBL" id="AC010349">
    <property type="status" value="NOT_ANNOTATED_CDS"/>
    <property type="molecule type" value="Genomic_DNA"/>
</dbReference>
<dbReference type="EMBL" id="AC012622">
    <property type="status" value="NOT_ANNOTATED_CDS"/>
    <property type="molecule type" value="Genomic_DNA"/>
</dbReference>
<dbReference type="EMBL" id="AC114290">
    <property type="status" value="NOT_ANNOTATED_CDS"/>
    <property type="molecule type" value="Genomic_DNA"/>
</dbReference>
<dbReference type="EMBL" id="CH471086">
    <property type="protein sequence ID" value="EAW49042.1"/>
    <property type="molecule type" value="Genomic_DNA"/>
</dbReference>
<dbReference type="CCDS" id="CCDS47253.2">
    <molecule id="C9JQI7-1"/>
</dbReference>
<dbReference type="RefSeq" id="NP_001034852.3">
    <molecule id="C9JQI7-1"/>
    <property type="nucleotide sequence ID" value="NM_001039763.4"/>
</dbReference>
<dbReference type="RefSeq" id="XP_006714733.1">
    <molecule id="C9JQI7-1"/>
    <property type="nucleotide sequence ID" value="XM_006714670.4"/>
</dbReference>
<dbReference type="RefSeq" id="XP_011541854.1">
    <molecule id="C9JQI7-1"/>
    <property type="nucleotide sequence ID" value="XM_011543552.3"/>
</dbReference>
<dbReference type="RefSeq" id="XP_011541855.1">
    <molecule id="C9JQI7-1"/>
    <property type="nucleotide sequence ID" value="XM_011543553.3"/>
</dbReference>
<dbReference type="RefSeq" id="XP_011541866.1">
    <property type="nucleotide sequence ID" value="XM_011543564.2"/>
</dbReference>
<dbReference type="RefSeq" id="XP_016865193.1">
    <property type="nucleotide sequence ID" value="XM_017009704.1"/>
</dbReference>
<dbReference type="SMR" id="C9JQI7"/>
<dbReference type="BioGRID" id="568408">
    <property type="interactions" value="5"/>
</dbReference>
<dbReference type="FunCoup" id="C9JQI7">
    <property type="interactions" value="89"/>
</dbReference>
<dbReference type="IntAct" id="C9JQI7">
    <property type="interactions" value="2"/>
</dbReference>
<dbReference type="MINT" id="C9JQI7"/>
<dbReference type="STRING" id="9606.ENSP00000401477"/>
<dbReference type="GlyGen" id="C9JQI7">
    <property type="glycosylation" value="1 site, 1 O-linked glycan (1 site)"/>
</dbReference>
<dbReference type="iPTMnet" id="C9JQI7"/>
<dbReference type="PhosphoSitePlus" id="C9JQI7"/>
<dbReference type="BioMuta" id="TMEM232"/>
<dbReference type="MassIVE" id="C9JQI7"/>
<dbReference type="PaxDb" id="9606-ENSP00000401477"/>
<dbReference type="PeptideAtlas" id="C9JQI7"/>
<dbReference type="ProteomicsDB" id="11246">
    <molecule id="C9JQI7-1"/>
</dbReference>
<dbReference type="Antibodypedia" id="57493">
    <property type="antibodies" value="16 antibodies from 8 providers"/>
</dbReference>
<dbReference type="DNASU" id="642987"/>
<dbReference type="Ensembl" id="ENST00000455884.7">
    <molecule id="C9JQI7-1"/>
    <property type="protein sequence ID" value="ENSP00000401477.2"/>
    <property type="gene ID" value="ENSG00000186952.15"/>
</dbReference>
<dbReference type="GeneID" id="642987"/>
<dbReference type="KEGG" id="hsa:642987"/>
<dbReference type="MANE-Select" id="ENST00000455884.7">
    <property type="protein sequence ID" value="ENSP00000401477.2"/>
    <property type="RefSeq nucleotide sequence ID" value="NM_001039763.4"/>
    <property type="RefSeq protein sequence ID" value="NP_001034852.3"/>
</dbReference>
<dbReference type="UCSC" id="uc011cvh.4">
    <molecule id="C9JQI7-1"/>
    <property type="organism name" value="human"/>
</dbReference>
<dbReference type="AGR" id="HGNC:37270"/>
<dbReference type="CTD" id="642987"/>
<dbReference type="DisGeNET" id="642987"/>
<dbReference type="GeneCards" id="TMEM232"/>
<dbReference type="HGNC" id="HGNC:37270">
    <property type="gene designation" value="TMEM232"/>
</dbReference>
<dbReference type="HPA" id="ENSG00000186952">
    <property type="expression patterns" value="Group enriched (fallopian tube, testis)"/>
</dbReference>
<dbReference type="MIM" id="620143">
    <property type="type" value="gene"/>
</dbReference>
<dbReference type="neXtProt" id="NX_C9JQI7"/>
<dbReference type="OpenTargets" id="ENSG00000186952"/>
<dbReference type="PharmGKB" id="PA165660571"/>
<dbReference type="VEuPathDB" id="HostDB:ENSG00000186952"/>
<dbReference type="eggNOG" id="ENOG502QVVE">
    <property type="taxonomic scope" value="Eukaryota"/>
</dbReference>
<dbReference type="GeneTree" id="ENSGT00390000014003"/>
<dbReference type="HOGENOM" id="CLU_015366_1_0_1"/>
<dbReference type="InParanoid" id="C9JQI7"/>
<dbReference type="OMA" id="DHHWQEE"/>
<dbReference type="OrthoDB" id="10016194at2759"/>
<dbReference type="PAN-GO" id="C9JQI7">
    <property type="GO annotations" value="0 GO annotations based on evolutionary models"/>
</dbReference>
<dbReference type="PhylomeDB" id="C9JQI7"/>
<dbReference type="TreeFam" id="TF336968"/>
<dbReference type="PathwayCommons" id="C9JQI7"/>
<dbReference type="SignaLink" id="C9JQI7"/>
<dbReference type="BioGRID-ORCS" id="642987">
    <property type="hits" value="9 hits in 1140 CRISPR screens"/>
</dbReference>
<dbReference type="ChiTaRS" id="TMEM232">
    <property type="organism name" value="human"/>
</dbReference>
<dbReference type="GenomeRNAi" id="642987"/>
<dbReference type="Pharos" id="C9JQI7">
    <property type="development level" value="Tdark"/>
</dbReference>
<dbReference type="PRO" id="PR:C9JQI7"/>
<dbReference type="Proteomes" id="UP000005640">
    <property type="component" value="Chromosome 5"/>
</dbReference>
<dbReference type="RNAct" id="C9JQI7">
    <property type="molecule type" value="protein"/>
</dbReference>
<dbReference type="Bgee" id="ENSG00000186952">
    <property type="expression patterns" value="Expressed in bronchial epithelial cell and 111 other cell types or tissues"/>
</dbReference>
<dbReference type="ExpressionAtlas" id="C9JQI7">
    <property type="expression patterns" value="baseline and differential"/>
</dbReference>
<dbReference type="GO" id="GO:0016020">
    <property type="term" value="C:membrane"/>
    <property type="evidence" value="ECO:0007669"/>
    <property type="project" value="UniProtKB-SubCell"/>
</dbReference>
<dbReference type="GO" id="GO:0001520">
    <property type="term" value="C:outer dense fiber"/>
    <property type="evidence" value="ECO:0000318"/>
    <property type="project" value="GO_Central"/>
</dbReference>
<dbReference type="GO" id="GO:0030030">
    <property type="term" value="P:cell projection organization"/>
    <property type="evidence" value="ECO:0007669"/>
    <property type="project" value="UniProtKB-KW"/>
</dbReference>
<dbReference type="GO" id="GO:0030317">
    <property type="term" value="P:flagellated sperm motility"/>
    <property type="evidence" value="ECO:0000250"/>
    <property type="project" value="UniProtKB"/>
</dbReference>
<dbReference type="GO" id="GO:0098544">
    <property type="term" value="P:maintenance of protein complex location"/>
    <property type="evidence" value="ECO:0007669"/>
    <property type="project" value="Ensembl"/>
</dbReference>
<dbReference type="GO" id="GO:0160087">
    <property type="term" value="P:spermatid cytoplasm removal during spermiation of flagellated sperm"/>
    <property type="evidence" value="ECO:0000318"/>
    <property type="project" value="GO_Central"/>
</dbReference>
<dbReference type="GO" id="GO:0007283">
    <property type="term" value="P:spermatogenesis"/>
    <property type="evidence" value="ECO:0000250"/>
    <property type="project" value="UniProtKB"/>
</dbReference>
<dbReference type="InterPro" id="IPR031747">
    <property type="entry name" value="TMEM232"/>
</dbReference>
<dbReference type="PANTHER" id="PTHR28651">
    <property type="entry name" value="TRANSMEMBRANE PROTEIN 232"/>
    <property type="match status" value="1"/>
</dbReference>
<dbReference type="PANTHER" id="PTHR28651:SF1">
    <property type="entry name" value="TRANSMEMBRANE PROTEIN 232"/>
    <property type="match status" value="1"/>
</dbReference>
<dbReference type="Pfam" id="PF15877">
    <property type="entry name" value="TMEM232"/>
    <property type="match status" value="1"/>
</dbReference>
<reference key="1">
    <citation type="journal article" date="2004" name="Nat. Genet.">
        <title>Complete sequencing and characterization of 21,243 full-length human cDNAs.</title>
        <authorList>
            <person name="Ota T."/>
            <person name="Suzuki Y."/>
            <person name="Nishikawa T."/>
            <person name="Otsuki T."/>
            <person name="Sugiyama T."/>
            <person name="Irie R."/>
            <person name="Wakamatsu A."/>
            <person name="Hayashi K."/>
            <person name="Sato H."/>
            <person name="Nagai K."/>
            <person name="Kimura K."/>
            <person name="Makita H."/>
            <person name="Sekine M."/>
            <person name="Obayashi M."/>
            <person name="Nishi T."/>
            <person name="Shibahara T."/>
            <person name="Tanaka T."/>
            <person name="Ishii S."/>
            <person name="Yamamoto J."/>
            <person name="Saito K."/>
            <person name="Kawai Y."/>
            <person name="Isono Y."/>
            <person name="Nakamura Y."/>
            <person name="Nagahari K."/>
            <person name="Murakami K."/>
            <person name="Yasuda T."/>
            <person name="Iwayanagi T."/>
            <person name="Wagatsuma M."/>
            <person name="Shiratori A."/>
            <person name="Sudo H."/>
            <person name="Hosoiri T."/>
            <person name="Kaku Y."/>
            <person name="Kodaira H."/>
            <person name="Kondo H."/>
            <person name="Sugawara M."/>
            <person name="Takahashi M."/>
            <person name="Kanda K."/>
            <person name="Yokoi T."/>
            <person name="Furuya T."/>
            <person name="Kikkawa E."/>
            <person name="Omura Y."/>
            <person name="Abe K."/>
            <person name="Kamihara K."/>
            <person name="Katsuta N."/>
            <person name="Sato K."/>
            <person name="Tanikawa M."/>
            <person name="Yamazaki M."/>
            <person name="Ninomiya K."/>
            <person name="Ishibashi T."/>
            <person name="Yamashita H."/>
            <person name="Murakawa K."/>
            <person name="Fujimori K."/>
            <person name="Tanai H."/>
            <person name="Kimata M."/>
            <person name="Watanabe M."/>
            <person name="Hiraoka S."/>
            <person name="Chiba Y."/>
            <person name="Ishida S."/>
            <person name="Ono Y."/>
            <person name="Takiguchi S."/>
            <person name="Watanabe S."/>
            <person name="Yosida M."/>
            <person name="Hotuta T."/>
            <person name="Kusano J."/>
            <person name="Kanehori K."/>
            <person name="Takahashi-Fujii A."/>
            <person name="Hara H."/>
            <person name="Tanase T.-O."/>
            <person name="Nomura Y."/>
            <person name="Togiya S."/>
            <person name="Komai F."/>
            <person name="Hara R."/>
            <person name="Takeuchi K."/>
            <person name="Arita M."/>
            <person name="Imose N."/>
            <person name="Musashino K."/>
            <person name="Yuuki H."/>
            <person name="Oshima A."/>
            <person name="Sasaki N."/>
            <person name="Aotsuka S."/>
            <person name="Yoshikawa Y."/>
            <person name="Matsunawa H."/>
            <person name="Ichihara T."/>
            <person name="Shiohata N."/>
            <person name="Sano S."/>
            <person name="Moriya S."/>
            <person name="Momiyama H."/>
            <person name="Satoh N."/>
            <person name="Takami S."/>
            <person name="Terashima Y."/>
            <person name="Suzuki O."/>
            <person name="Nakagawa S."/>
            <person name="Senoh A."/>
            <person name="Mizoguchi H."/>
            <person name="Goto Y."/>
            <person name="Shimizu F."/>
            <person name="Wakebe H."/>
            <person name="Hishigaki H."/>
            <person name="Watanabe T."/>
            <person name="Sugiyama A."/>
            <person name="Takemoto M."/>
            <person name="Kawakami B."/>
            <person name="Yamazaki M."/>
            <person name="Watanabe K."/>
            <person name="Kumagai A."/>
            <person name="Itakura S."/>
            <person name="Fukuzumi Y."/>
            <person name="Fujimori Y."/>
            <person name="Komiyama M."/>
            <person name="Tashiro H."/>
            <person name="Tanigami A."/>
            <person name="Fujiwara T."/>
            <person name="Ono T."/>
            <person name="Yamada K."/>
            <person name="Fujii Y."/>
            <person name="Ozaki K."/>
            <person name="Hirao M."/>
            <person name="Ohmori Y."/>
            <person name="Kawabata A."/>
            <person name="Hikiji T."/>
            <person name="Kobatake N."/>
            <person name="Inagaki H."/>
            <person name="Ikema Y."/>
            <person name="Okamoto S."/>
            <person name="Okitani R."/>
            <person name="Kawakami T."/>
            <person name="Noguchi S."/>
            <person name="Itoh T."/>
            <person name="Shigeta K."/>
            <person name="Senba T."/>
            <person name="Matsumura K."/>
            <person name="Nakajima Y."/>
            <person name="Mizuno T."/>
            <person name="Morinaga M."/>
            <person name="Sasaki M."/>
            <person name="Togashi T."/>
            <person name="Oyama M."/>
            <person name="Hata H."/>
            <person name="Watanabe M."/>
            <person name="Komatsu T."/>
            <person name="Mizushima-Sugano J."/>
            <person name="Satoh T."/>
            <person name="Shirai Y."/>
            <person name="Takahashi Y."/>
            <person name="Nakagawa K."/>
            <person name="Okumura K."/>
            <person name="Nagase T."/>
            <person name="Nomura N."/>
            <person name="Kikuchi H."/>
            <person name="Masuho Y."/>
            <person name="Yamashita R."/>
            <person name="Nakai K."/>
            <person name="Yada T."/>
            <person name="Nakamura Y."/>
            <person name="Ohara O."/>
            <person name="Isogai T."/>
            <person name="Sugano S."/>
        </authorList>
    </citation>
    <scope>NUCLEOTIDE SEQUENCE [LARGE SCALE MRNA] (ISOFORM 2)</scope>
    <source>
        <tissue>Thalamus</tissue>
    </source>
</reference>
<reference key="2">
    <citation type="journal article" date="2004" name="Nature">
        <title>The DNA sequence and comparative analysis of human chromosome 5.</title>
        <authorList>
            <person name="Schmutz J."/>
            <person name="Martin J."/>
            <person name="Terry A."/>
            <person name="Couronne O."/>
            <person name="Grimwood J."/>
            <person name="Lowry S."/>
            <person name="Gordon L.A."/>
            <person name="Scott D."/>
            <person name="Xie G."/>
            <person name="Huang W."/>
            <person name="Hellsten U."/>
            <person name="Tran-Gyamfi M."/>
            <person name="She X."/>
            <person name="Prabhakar S."/>
            <person name="Aerts A."/>
            <person name="Altherr M."/>
            <person name="Bajorek E."/>
            <person name="Black S."/>
            <person name="Branscomb E."/>
            <person name="Caoile C."/>
            <person name="Challacombe J.F."/>
            <person name="Chan Y.M."/>
            <person name="Denys M."/>
            <person name="Detter J.C."/>
            <person name="Escobar J."/>
            <person name="Flowers D."/>
            <person name="Fotopulos D."/>
            <person name="Glavina T."/>
            <person name="Gomez M."/>
            <person name="Gonzales E."/>
            <person name="Goodstein D."/>
            <person name="Grigoriev I."/>
            <person name="Groza M."/>
            <person name="Hammon N."/>
            <person name="Hawkins T."/>
            <person name="Haydu L."/>
            <person name="Israni S."/>
            <person name="Jett J."/>
            <person name="Kadner K."/>
            <person name="Kimball H."/>
            <person name="Kobayashi A."/>
            <person name="Lopez F."/>
            <person name="Lou Y."/>
            <person name="Martinez D."/>
            <person name="Medina C."/>
            <person name="Morgan J."/>
            <person name="Nandkeshwar R."/>
            <person name="Noonan J.P."/>
            <person name="Pitluck S."/>
            <person name="Pollard M."/>
            <person name="Predki P."/>
            <person name="Priest J."/>
            <person name="Ramirez L."/>
            <person name="Retterer J."/>
            <person name="Rodriguez A."/>
            <person name="Rogers S."/>
            <person name="Salamov A."/>
            <person name="Salazar A."/>
            <person name="Thayer N."/>
            <person name="Tice H."/>
            <person name="Tsai M."/>
            <person name="Ustaszewska A."/>
            <person name="Vo N."/>
            <person name="Wheeler J."/>
            <person name="Wu K."/>
            <person name="Yang J."/>
            <person name="Dickson M."/>
            <person name="Cheng J.-F."/>
            <person name="Eichler E.E."/>
            <person name="Olsen A."/>
            <person name="Pennacchio L.A."/>
            <person name="Rokhsar D.S."/>
            <person name="Richardson P."/>
            <person name="Lucas S.M."/>
            <person name="Myers R.M."/>
            <person name="Rubin E.M."/>
        </authorList>
    </citation>
    <scope>NUCLEOTIDE SEQUENCE [LARGE SCALE GENOMIC DNA]</scope>
</reference>
<reference key="3">
    <citation type="submission" date="2005-09" db="EMBL/GenBank/DDBJ databases">
        <authorList>
            <person name="Mural R.J."/>
            <person name="Istrail S."/>
            <person name="Sutton G.G."/>
            <person name="Florea L."/>
            <person name="Halpern A.L."/>
            <person name="Mobarry C.M."/>
            <person name="Lippert R."/>
            <person name="Walenz B."/>
            <person name="Shatkay H."/>
            <person name="Dew I."/>
            <person name="Miller J.R."/>
            <person name="Flanigan M.J."/>
            <person name="Edwards N.J."/>
            <person name="Bolanos R."/>
            <person name="Fasulo D."/>
            <person name="Halldorsson B.V."/>
            <person name="Hannenhalli S."/>
            <person name="Turner R."/>
            <person name="Yooseph S."/>
            <person name="Lu F."/>
            <person name="Nusskern D.R."/>
            <person name="Shue B.C."/>
            <person name="Zheng X.H."/>
            <person name="Zhong F."/>
            <person name="Delcher A.L."/>
            <person name="Huson D.H."/>
            <person name="Kravitz S.A."/>
            <person name="Mouchard L."/>
            <person name="Reinert K."/>
            <person name="Remington K.A."/>
            <person name="Clark A.G."/>
            <person name="Waterman M.S."/>
            <person name="Eichler E.E."/>
            <person name="Adams M.D."/>
            <person name="Hunkapiller M.W."/>
            <person name="Myers E.W."/>
            <person name="Venter J.C."/>
        </authorList>
    </citation>
    <scope>NUCLEOTIDE SEQUENCE [LARGE SCALE GENOMIC DNA]</scope>
</reference>
<feature type="chain" id="PRO_0000395035" description="Transmembrane protein 232">
    <location>
        <begin position="1"/>
        <end position="657"/>
    </location>
</feature>
<feature type="transmembrane region" description="Helical" evidence="2">
    <location>
        <begin position="168"/>
        <end position="188"/>
    </location>
</feature>
<feature type="transmembrane region" description="Helical" evidence="2">
    <location>
        <begin position="353"/>
        <end position="373"/>
    </location>
</feature>
<feature type="splice variant" id="VSP_039352" description="In isoform 1." evidence="3">
    <original>AELNDPTDPFTRYSTNISSNVGEEVFSKYIGWRIANTLSKLFFPPIEAHFLPLKKPSIKKDQTKYPNKKLESVKKQVLHFTVREHPSVSEIPMFPYPDFFTKADKELAKIIDHHWQEELKIREKEDAICKAQELKDKKLAEKNHFQEVMKKREEKLHKQTKPYELPYRKEVI</original>
    <variation>GTSFCIRNSHVSISRFLHQGR</variation>
    <location>
        <begin position="486"/>
        <end position="657"/>
    </location>
</feature>
<protein>
    <recommendedName>
        <fullName>Transmembrane protein 232</fullName>
    </recommendedName>
</protein>
<sequence length="657" mass="76453">MNMPVNKSPMINTCGGISSPYHEELWKLNFQHLSGERGHKSRPTFSITKEFILRFNQTQNSKEKEELLELARKIILRCKRKLGLKTLGSGRHVHLPAAWTEVIYLAQCKGEIQDESLNMLYASLDHASFDYDHLPALFFVAESVLYRLCCDASLKTYLYSVEIKLAKIGYLVFLRLFIFFLHGHLESFKQHLLRLQPYLYALSFSGASYHKYPNIFSNVQFILKASEIIGKRELRSESIFRPVEDKKRYENTDSDMGGYEINHLLWHCVAAWSCVQNNSPQLNNVLEHLVFHKTQLQKKCWLDSVLALLVLGEAAKLNMACLKALMDVVRDFVSSIMSVQNQEESCKVDDFSWAWNVVYIYTVILAEICLYAATSDLRKTALIGFCHCKSSQKNILYLDKSVPPELKETSILSLLEYFSSKMSENCDQVVWTGYYGLVYNLVKISWELQGDEEQDGLRNMIWQTLQKTKDYEEDVRIQNAINIAQAELNDPTDPFTRYSTNISSNVGEEVFSKYIGWRIANTLSKLFFPPIEAHFLPLKKPSIKKDQTKYPNKKLESVKKQVLHFTVREHPSVSEIPMFPYPDFFTKADKELAKIIDHHWQEELKIREKEDAICKAQELKDKKLAEKNHFQEVMKKREEKLHKQTKPYELPYRKEVI</sequence>
<keyword id="KW-0025">Alternative splicing</keyword>
<keyword id="KW-0970">Cilium biogenesis/degradation</keyword>
<keyword id="KW-0472">Membrane</keyword>
<keyword id="KW-1267">Proteomics identification</keyword>
<keyword id="KW-1185">Reference proteome</keyword>
<keyword id="KW-0812">Transmembrane</keyword>
<keyword id="KW-1133">Transmembrane helix</keyword>
<gene>
    <name type="primary">TMEM232</name>
</gene>